<dbReference type="EMBL" id="AM920689">
    <property type="protein sequence ID" value="CAP52392.1"/>
    <property type="molecule type" value="Genomic_DNA"/>
</dbReference>
<dbReference type="SMR" id="B0RX26"/>
<dbReference type="KEGG" id="xca:xcc-b100_3029"/>
<dbReference type="HOGENOM" id="CLU_038009_1_2_6"/>
<dbReference type="Proteomes" id="UP000001188">
    <property type="component" value="Chromosome"/>
</dbReference>
<dbReference type="GO" id="GO:0005829">
    <property type="term" value="C:cytosol"/>
    <property type="evidence" value="ECO:0007669"/>
    <property type="project" value="TreeGrafter"/>
</dbReference>
<dbReference type="GO" id="GO:0005886">
    <property type="term" value="C:plasma membrane"/>
    <property type="evidence" value="ECO:0007669"/>
    <property type="project" value="UniProtKB-SubCell"/>
</dbReference>
<dbReference type="GO" id="GO:0005525">
    <property type="term" value="F:GTP binding"/>
    <property type="evidence" value="ECO:0007669"/>
    <property type="project" value="UniProtKB-UniRule"/>
</dbReference>
<dbReference type="GO" id="GO:0003924">
    <property type="term" value="F:GTPase activity"/>
    <property type="evidence" value="ECO:0007669"/>
    <property type="project" value="UniProtKB-UniRule"/>
</dbReference>
<dbReference type="GO" id="GO:0043024">
    <property type="term" value="F:ribosomal small subunit binding"/>
    <property type="evidence" value="ECO:0007669"/>
    <property type="project" value="TreeGrafter"/>
</dbReference>
<dbReference type="GO" id="GO:0070181">
    <property type="term" value="F:small ribosomal subunit rRNA binding"/>
    <property type="evidence" value="ECO:0007669"/>
    <property type="project" value="UniProtKB-UniRule"/>
</dbReference>
<dbReference type="GO" id="GO:0000028">
    <property type="term" value="P:ribosomal small subunit assembly"/>
    <property type="evidence" value="ECO:0007669"/>
    <property type="project" value="TreeGrafter"/>
</dbReference>
<dbReference type="CDD" id="cd04163">
    <property type="entry name" value="Era"/>
    <property type="match status" value="1"/>
</dbReference>
<dbReference type="CDD" id="cd22534">
    <property type="entry name" value="KH-II_Era"/>
    <property type="match status" value="1"/>
</dbReference>
<dbReference type="FunFam" id="3.30.300.20:FF:000003">
    <property type="entry name" value="GTPase Era"/>
    <property type="match status" value="1"/>
</dbReference>
<dbReference type="FunFam" id="3.40.50.300:FF:001543">
    <property type="entry name" value="GTPase Era"/>
    <property type="match status" value="1"/>
</dbReference>
<dbReference type="Gene3D" id="3.30.300.20">
    <property type="match status" value="1"/>
</dbReference>
<dbReference type="Gene3D" id="3.40.50.300">
    <property type="entry name" value="P-loop containing nucleotide triphosphate hydrolases"/>
    <property type="match status" value="1"/>
</dbReference>
<dbReference type="HAMAP" id="MF_00367">
    <property type="entry name" value="GTPase_Era"/>
    <property type="match status" value="1"/>
</dbReference>
<dbReference type="InterPro" id="IPR030388">
    <property type="entry name" value="G_ERA_dom"/>
</dbReference>
<dbReference type="InterPro" id="IPR006073">
    <property type="entry name" value="GTP-bd"/>
</dbReference>
<dbReference type="InterPro" id="IPR005662">
    <property type="entry name" value="GTPase_Era-like"/>
</dbReference>
<dbReference type="InterPro" id="IPR015946">
    <property type="entry name" value="KH_dom-like_a/b"/>
</dbReference>
<dbReference type="InterPro" id="IPR004044">
    <property type="entry name" value="KH_dom_type_2"/>
</dbReference>
<dbReference type="InterPro" id="IPR009019">
    <property type="entry name" value="KH_sf_prok-type"/>
</dbReference>
<dbReference type="InterPro" id="IPR027417">
    <property type="entry name" value="P-loop_NTPase"/>
</dbReference>
<dbReference type="InterPro" id="IPR005225">
    <property type="entry name" value="Small_GTP-bd"/>
</dbReference>
<dbReference type="NCBIfam" id="TIGR00436">
    <property type="entry name" value="era"/>
    <property type="match status" value="1"/>
</dbReference>
<dbReference type="NCBIfam" id="NF000908">
    <property type="entry name" value="PRK00089.1"/>
    <property type="match status" value="1"/>
</dbReference>
<dbReference type="NCBIfam" id="TIGR00231">
    <property type="entry name" value="small_GTP"/>
    <property type="match status" value="1"/>
</dbReference>
<dbReference type="PANTHER" id="PTHR42698">
    <property type="entry name" value="GTPASE ERA"/>
    <property type="match status" value="1"/>
</dbReference>
<dbReference type="PANTHER" id="PTHR42698:SF1">
    <property type="entry name" value="GTPASE ERA, MITOCHONDRIAL"/>
    <property type="match status" value="1"/>
</dbReference>
<dbReference type="Pfam" id="PF07650">
    <property type="entry name" value="KH_2"/>
    <property type="match status" value="1"/>
</dbReference>
<dbReference type="Pfam" id="PF01926">
    <property type="entry name" value="MMR_HSR1"/>
    <property type="match status" value="1"/>
</dbReference>
<dbReference type="PRINTS" id="PR00326">
    <property type="entry name" value="GTP1OBG"/>
</dbReference>
<dbReference type="SUPFAM" id="SSF52540">
    <property type="entry name" value="P-loop containing nucleoside triphosphate hydrolases"/>
    <property type="match status" value="1"/>
</dbReference>
<dbReference type="SUPFAM" id="SSF54814">
    <property type="entry name" value="Prokaryotic type KH domain (KH-domain type II)"/>
    <property type="match status" value="1"/>
</dbReference>
<dbReference type="PROSITE" id="PS51713">
    <property type="entry name" value="G_ERA"/>
    <property type="match status" value="1"/>
</dbReference>
<dbReference type="PROSITE" id="PS50823">
    <property type="entry name" value="KH_TYPE_2"/>
    <property type="match status" value="1"/>
</dbReference>
<evidence type="ECO:0000255" key="1">
    <source>
        <dbReference type="HAMAP-Rule" id="MF_00367"/>
    </source>
</evidence>
<evidence type="ECO:0000255" key="2">
    <source>
        <dbReference type="PROSITE-ProRule" id="PRU01050"/>
    </source>
</evidence>
<name>ERA_XANCB</name>
<keyword id="KW-0997">Cell inner membrane</keyword>
<keyword id="KW-1003">Cell membrane</keyword>
<keyword id="KW-0963">Cytoplasm</keyword>
<keyword id="KW-0342">GTP-binding</keyword>
<keyword id="KW-0472">Membrane</keyword>
<keyword id="KW-0547">Nucleotide-binding</keyword>
<keyword id="KW-0690">Ribosome biogenesis</keyword>
<keyword id="KW-0694">RNA-binding</keyword>
<keyword id="KW-0699">rRNA-binding</keyword>
<organism>
    <name type="scientific">Xanthomonas campestris pv. campestris (strain B100)</name>
    <dbReference type="NCBI Taxonomy" id="509169"/>
    <lineage>
        <taxon>Bacteria</taxon>
        <taxon>Pseudomonadati</taxon>
        <taxon>Pseudomonadota</taxon>
        <taxon>Gammaproteobacteria</taxon>
        <taxon>Lysobacterales</taxon>
        <taxon>Lysobacteraceae</taxon>
        <taxon>Xanthomonas</taxon>
    </lineage>
</organism>
<protein>
    <recommendedName>
        <fullName evidence="1">GTPase Era</fullName>
    </recommendedName>
</protein>
<gene>
    <name evidence="1" type="primary">era</name>
    <name type="ordered locus">xcc-b100_3029</name>
</gene>
<sequence>MSETSPHRSGSVAVIGRPNVGKSTLTNALVGAKVSIVSNRPQTTRHRLLGIATFPEGQLMLVDTPGLHREQKRAMNRVMNRAARGSLEGVDAAVLVIEAGRWDEEDTLAFRVLSDADVPVVLVVNKVDRLKDKTALFPFLAQVSEGRTFAAVHPVSALKRKGLEALVSDLLKLVPEAEAMYGEDEITDRSQRFLAGELVREQLMRQLGEELPYATTVEIERFAEDGALLRIGAVIWVEREGQKAIVIGKGGTRLKDIGGKARLQMERLFGAKVFLETWVRVREGWSDDEAALKAFGYD</sequence>
<accession>B0RX26</accession>
<proteinExistence type="inferred from homology"/>
<reference key="1">
    <citation type="journal article" date="2008" name="J. Biotechnol.">
        <title>The genome of Xanthomonas campestris pv. campestris B100 and its use for the reconstruction of metabolic pathways involved in xanthan biosynthesis.</title>
        <authorList>
            <person name="Vorhoelter F.-J."/>
            <person name="Schneiker S."/>
            <person name="Goesmann A."/>
            <person name="Krause L."/>
            <person name="Bekel T."/>
            <person name="Kaiser O."/>
            <person name="Linke B."/>
            <person name="Patschkowski T."/>
            <person name="Rueckert C."/>
            <person name="Schmid J."/>
            <person name="Sidhu V.K."/>
            <person name="Sieber V."/>
            <person name="Tauch A."/>
            <person name="Watt S.A."/>
            <person name="Weisshaar B."/>
            <person name="Becker A."/>
            <person name="Niehaus K."/>
            <person name="Puehler A."/>
        </authorList>
    </citation>
    <scope>NUCLEOTIDE SEQUENCE [LARGE SCALE GENOMIC DNA]</scope>
    <source>
        <strain>B100</strain>
    </source>
</reference>
<comment type="function">
    <text evidence="1">An essential GTPase that binds both GDP and GTP, with rapid nucleotide exchange. Plays a role in 16S rRNA processing and 30S ribosomal subunit biogenesis and possibly also in cell cycle regulation and energy metabolism.</text>
</comment>
<comment type="subunit">
    <text evidence="1">Monomer.</text>
</comment>
<comment type="subcellular location">
    <subcellularLocation>
        <location>Cytoplasm</location>
    </subcellularLocation>
    <subcellularLocation>
        <location evidence="1">Cell inner membrane</location>
        <topology evidence="1">Peripheral membrane protein</topology>
    </subcellularLocation>
</comment>
<comment type="similarity">
    <text evidence="1 2">Belongs to the TRAFAC class TrmE-Era-EngA-EngB-Septin-like GTPase superfamily. Era GTPase family.</text>
</comment>
<feature type="chain" id="PRO_1000121368" description="GTPase Era">
    <location>
        <begin position="1"/>
        <end position="298"/>
    </location>
</feature>
<feature type="domain" description="Era-type G" evidence="2">
    <location>
        <begin position="8"/>
        <end position="176"/>
    </location>
</feature>
<feature type="domain" description="KH type-2" evidence="1">
    <location>
        <begin position="199"/>
        <end position="283"/>
    </location>
</feature>
<feature type="region of interest" description="G1" evidence="2">
    <location>
        <begin position="16"/>
        <end position="23"/>
    </location>
</feature>
<feature type="region of interest" description="G2" evidence="2">
    <location>
        <begin position="42"/>
        <end position="46"/>
    </location>
</feature>
<feature type="region of interest" description="G3" evidence="2">
    <location>
        <begin position="63"/>
        <end position="66"/>
    </location>
</feature>
<feature type="region of interest" description="G4" evidence="2">
    <location>
        <begin position="125"/>
        <end position="128"/>
    </location>
</feature>
<feature type="region of interest" description="G5" evidence="2">
    <location>
        <begin position="155"/>
        <end position="157"/>
    </location>
</feature>
<feature type="binding site" evidence="1">
    <location>
        <begin position="16"/>
        <end position="23"/>
    </location>
    <ligand>
        <name>GTP</name>
        <dbReference type="ChEBI" id="CHEBI:37565"/>
    </ligand>
</feature>
<feature type="binding site" evidence="1">
    <location>
        <begin position="63"/>
        <end position="67"/>
    </location>
    <ligand>
        <name>GTP</name>
        <dbReference type="ChEBI" id="CHEBI:37565"/>
    </ligand>
</feature>
<feature type="binding site" evidence="1">
    <location>
        <begin position="125"/>
        <end position="128"/>
    </location>
    <ligand>
        <name>GTP</name>
        <dbReference type="ChEBI" id="CHEBI:37565"/>
    </ligand>
</feature>